<organism>
    <name type="scientific">Aspergillus oryzae (strain ATCC 42149 / RIB 40)</name>
    <name type="common">Yellow koji mold</name>
    <dbReference type="NCBI Taxonomy" id="510516"/>
    <lineage>
        <taxon>Eukaryota</taxon>
        <taxon>Fungi</taxon>
        <taxon>Dikarya</taxon>
        <taxon>Ascomycota</taxon>
        <taxon>Pezizomycotina</taxon>
        <taxon>Eurotiomycetes</taxon>
        <taxon>Eurotiomycetidae</taxon>
        <taxon>Eurotiales</taxon>
        <taxon>Aspergillaceae</taxon>
        <taxon>Aspergillus</taxon>
        <taxon>Aspergillus subgen. Circumdati</taxon>
    </lineage>
</organism>
<protein>
    <recommendedName>
        <fullName>Probable xyloglucan-specific endo-beta-1,4-glucanase A</fullName>
        <ecNumber>3.2.1.151</ecNumber>
    </recommendedName>
    <alternativeName>
        <fullName>Xyloglucanase A</fullName>
    </alternativeName>
    <alternativeName>
        <fullName>Xyloglucanendohydrolase A</fullName>
    </alternativeName>
</protein>
<sequence>MKFLTPLVLSSLASAAALNRRADMCGQWDTTTTDKFTLYNNLWGEGNADSGSQCTGLDSDDGNTIAWHTSWTWTGGAGQVKSFANVAYNFEATQLSQLSSIPSTWKWENTGSDIVADVAYDLFTSSSADGDEEYEIMIWLAALGGAGPISSTGSAIATPTVGGQSWSLYSGPNGQMTVFSFVASSTTEDFSADLNDFLKYLQEEQGMPSSQYLTHVQAGTEPFSGSNVKFTTSSYSVSVA</sequence>
<feature type="signal peptide" evidence="2">
    <location>
        <begin position="1"/>
        <end position="15"/>
    </location>
</feature>
<feature type="chain" id="PRO_0000394073" description="Probable xyloglucan-specific endo-beta-1,4-glucanase A">
    <location>
        <begin position="16"/>
        <end position="240"/>
    </location>
</feature>
<keyword id="KW-0119">Carbohydrate metabolism</keyword>
<keyword id="KW-0961">Cell wall biogenesis/degradation</keyword>
<keyword id="KW-0326">Glycosidase</keyword>
<keyword id="KW-0378">Hydrolase</keyword>
<keyword id="KW-0624">Polysaccharide degradation</keyword>
<keyword id="KW-1185">Reference proteome</keyword>
<keyword id="KW-0964">Secreted</keyword>
<keyword id="KW-0732">Signal</keyword>
<gene>
    <name type="primary">xgeA</name>
    <name type="ORF">AO090003000905</name>
</gene>
<accession>Q2UK93</accession>
<evidence type="ECO:0000250" key="1"/>
<evidence type="ECO:0000255" key="2"/>
<evidence type="ECO:0000305" key="3"/>
<comment type="function">
    <text evidence="1">Catalyzes endohydrolysis of 1,4-beta-D-glucosidic linkages in xyloglucan with retention of the beta-configuration of the glycosyl residues. Specific for xyloglucan and does not hydrolyze other cell wall components (By similarity).</text>
</comment>
<comment type="catalytic activity">
    <reaction>
        <text>xyloglucan + H2O = xyloglucan oligosaccharides.</text>
        <dbReference type="EC" id="3.2.1.151"/>
    </reaction>
</comment>
<comment type="subcellular location">
    <subcellularLocation>
        <location evidence="3">Secreted</location>
    </subcellularLocation>
</comment>
<comment type="similarity">
    <text evidence="3">Belongs to the glycosyl hydrolase 12 (cellulase H) family.</text>
</comment>
<name>XGEA_ASPOR</name>
<reference key="1">
    <citation type="journal article" date="2005" name="Nature">
        <title>Genome sequencing and analysis of Aspergillus oryzae.</title>
        <authorList>
            <person name="Machida M."/>
            <person name="Asai K."/>
            <person name="Sano M."/>
            <person name="Tanaka T."/>
            <person name="Kumagai T."/>
            <person name="Terai G."/>
            <person name="Kusumoto K."/>
            <person name="Arima T."/>
            <person name="Akita O."/>
            <person name="Kashiwagi Y."/>
            <person name="Abe K."/>
            <person name="Gomi K."/>
            <person name="Horiuchi H."/>
            <person name="Kitamoto K."/>
            <person name="Kobayashi T."/>
            <person name="Takeuchi M."/>
            <person name="Denning D.W."/>
            <person name="Galagan J.E."/>
            <person name="Nierman W.C."/>
            <person name="Yu J."/>
            <person name="Archer D.B."/>
            <person name="Bennett J.W."/>
            <person name="Bhatnagar D."/>
            <person name="Cleveland T.E."/>
            <person name="Fedorova N.D."/>
            <person name="Gotoh O."/>
            <person name="Horikawa H."/>
            <person name="Hosoyama A."/>
            <person name="Ichinomiya M."/>
            <person name="Igarashi R."/>
            <person name="Iwashita K."/>
            <person name="Juvvadi P.R."/>
            <person name="Kato M."/>
            <person name="Kato Y."/>
            <person name="Kin T."/>
            <person name="Kokubun A."/>
            <person name="Maeda H."/>
            <person name="Maeyama N."/>
            <person name="Maruyama J."/>
            <person name="Nagasaki H."/>
            <person name="Nakajima T."/>
            <person name="Oda K."/>
            <person name="Okada K."/>
            <person name="Paulsen I."/>
            <person name="Sakamoto K."/>
            <person name="Sawano T."/>
            <person name="Takahashi M."/>
            <person name="Takase K."/>
            <person name="Terabayashi Y."/>
            <person name="Wortman J.R."/>
            <person name="Yamada O."/>
            <person name="Yamagata Y."/>
            <person name="Anazawa H."/>
            <person name="Hata Y."/>
            <person name="Koide Y."/>
            <person name="Komori T."/>
            <person name="Koyama Y."/>
            <person name="Minetoki T."/>
            <person name="Suharnan S."/>
            <person name="Tanaka A."/>
            <person name="Isono K."/>
            <person name="Kuhara S."/>
            <person name="Ogasawara N."/>
            <person name="Kikuchi H."/>
        </authorList>
    </citation>
    <scope>NUCLEOTIDE SEQUENCE [LARGE SCALE GENOMIC DNA]</scope>
    <source>
        <strain>ATCC 42149 / RIB 40</strain>
    </source>
</reference>
<proteinExistence type="inferred from homology"/>
<dbReference type="EC" id="3.2.1.151"/>
<dbReference type="EMBL" id="BA000050">
    <property type="protein sequence ID" value="BAE58022.1"/>
    <property type="molecule type" value="Genomic_DNA"/>
</dbReference>
<dbReference type="RefSeq" id="XP_001820024.1">
    <property type="nucleotide sequence ID" value="XM_001819972.2"/>
</dbReference>
<dbReference type="SMR" id="Q2UK93"/>
<dbReference type="STRING" id="510516.Q2UK93"/>
<dbReference type="CAZy" id="GH12">
    <property type="family name" value="Glycoside Hydrolase Family 12"/>
</dbReference>
<dbReference type="EnsemblFungi" id="BAE58022">
    <property type="protein sequence ID" value="BAE58022"/>
    <property type="gene ID" value="AO090003000905"/>
</dbReference>
<dbReference type="GeneID" id="5992007"/>
<dbReference type="KEGG" id="aor:AO090003000905"/>
<dbReference type="VEuPathDB" id="FungiDB:AO090003000905"/>
<dbReference type="HOGENOM" id="CLU_051064_0_1_1"/>
<dbReference type="OMA" id="NLWGQAQ"/>
<dbReference type="OrthoDB" id="67868at5052"/>
<dbReference type="Proteomes" id="UP000006564">
    <property type="component" value="Chromosome 2"/>
</dbReference>
<dbReference type="GO" id="GO:0005576">
    <property type="term" value="C:extracellular region"/>
    <property type="evidence" value="ECO:0007669"/>
    <property type="project" value="UniProtKB-SubCell"/>
</dbReference>
<dbReference type="GO" id="GO:0008810">
    <property type="term" value="F:cellulase activity"/>
    <property type="evidence" value="ECO:0007669"/>
    <property type="project" value="InterPro"/>
</dbReference>
<dbReference type="GO" id="GO:0033946">
    <property type="term" value="F:xyloglucan-specific endo-beta-1,4-glucanase activity"/>
    <property type="evidence" value="ECO:0007669"/>
    <property type="project" value="UniProtKB-EC"/>
</dbReference>
<dbReference type="GO" id="GO:0071555">
    <property type="term" value="P:cell wall organization"/>
    <property type="evidence" value="ECO:0007669"/>
    <property type="project" value="UniProtKB-KW"/>
</dbReference>
<dbReference type="GO" id="GO:0000272">
    <property type="term" value="P:polysaccharide catabolic process"/>
    <property type="evidence" value="ECO:0007669"/>
    <property type="project" value="UniProtKB-KW"/>
</dbReference>
<dbReference type="Gene3D" id="2.60.120.180">
    <property type="match status" value="1"/>
</dbReference>
<dbReference type="InterPro" id="IPR013320">
    <property type="entry name" value="ConA-like_dom_sf"/>
</dbReference>
<dbReference type="InterPro" id="IPR013319">
    <property type="entry name" value="GH11/12"/>
</dbReference>
<dbReference type="InterPro" id="IPR002594">
    <property type="entry name" value="GH12"/>
</dbReference>
<dbReference type="PANTHER" id="PTHR34002">
    <property type="entry name" value="BLR1656 PROTEIN"/>
    <property type="match status" value="1"/>
</dbReference>
<dbReference type="PANTHER" id="PTHR34002:SF9">
    <property type="entry name" value="XYLOGLUCAN-SPECIFIC ENDO-BETA-1,4-GLUCANASE A"/>
    <property type="match status" value="1"/>
</dbReference>
<dbReference type="Pfam" id="PF01670">
    <property type="entry name" value="Glyco_hydro_12"/>
    <property type="match status" value="1"/>
</dbReference>
<dbReference type="SUPFAM" id="SSF49899">
    <property type="entry name" value="Concanavalin A-like lectins/glucanases"/>
    <property type="match status" value="1"/>
</dbReference>